<keyword id="KW-0067">ATP-binding</keyword>
<keyword id="KW-0342">GTP-binding</keyword>
<keyword id="KW-0547">Nucleotide-binding</keyword>
<feature type="chain" id="PRO_1000056823" description="Nucleotide-binding protein GTNG_3015">
    <location>
        <begin position="1"/>
        <end position="298"/>
    </location>
</feature>
<feature type="binding site" evidence="1">
    <location>
        <begin position="17"/>
        <end position="24"/>
    </location>
    <ligand>
        <name>ATP</name>
        <dbReference type="ChEBI" id="CHEBI:30616"/>
    </ligand>
</feature>
<feature type="binding site" evidence="1">
    <location>
        <begin position="68"/>
        <end position="71"/>
    </location>
    <ligand>
        <name>GTP</name>
        <dbReference type="ChEBI" id="CHEBI:37565"/>
    </ligand>
</feature>
<comment type="function">
    <text evidence="1">Displays ATPase and GTPase activities.</text>
</comment>
<comment type="similarity">
    <text evidence="1">Belongs to the RapZ-like family.</text>
</comment>
<proteinExistence type="inferred from homology"/>
<accession>A4ISQ6</accession>
<evidence type="ECO:0000255" key="1">
    <source>
        <dbReference type="HAMAP-Rule" id="MF_00636"/>
    </source>
</evidence>
<organism>
    <name type="scientific">Geobacillus thermodenitrificans (strain NG80-2)</name>
    <dbReference type="NCBI Taxonomy" id="420246"/>
    <lineage>
        <taxon>Bacteria</taxon>
        <taxon>Bacillati</taxon>
        <taxon>Bacillota</taxon>
        <taxon>Bacilli</taxon>
        <taxon>Bacillales</taxon>
        <taxon>Anoxybacillaceae</taxon>
        <taxon>Geobacillus</taxon>
    </lineage>
</organism>
<protein>
    <recommendedName>
        <fullName evidence="1">Nucleotide-binding protein GTNG_3015</fullName>
    </recommendedName>
</protein>
<reference key="1">
    <citation type="journal article" date="2007" name="Proc. Natl. Acad. Sci. U.S.A.">
        <title>Genome and proteome of long-chain alkane degrading Geobacillus thermodenitrificans NG80-2 isolated from a deep-subsurface oil reservoir.</title>
        <authorList>
            <person name="Feng L."/>
            <person name="Wang W."/>
            <person name="Cheng J."/>
            <person name="Ren Y."/>
            <person name="Zhao G."/>
            <person name="Gao C."/>
            <person name="Tang Y."/>
            <person name="Liu X."/>
            <person name="Han W."/>
            <person name="Peng X."/>
            <person name="Liu R."/>
            <person name="Wang L."/>
        </authorList>
    </citation>
    <scope>NUCLEOTIDE SEQUENCE [LARGE SCALE GENOMIC DNA]</scope>
    <source>
        <strain>NG80-2</strain>
    </source>
</reference>
<name>Y3015_GEOTN</name>
<sequence>MGQNGTVQPTQLVIITGMSGAGKTVAIQSFEDLGFFCVDNLPPTLLPKFLELVKESGNKMNKVALVMDLRSRDFFDHLFVALDELAEQEWIVPQILFLDAQDSTLVARYKETRRTHPLAPNEPPLEGIRLERQLLEEIKGRAQIIYDTTGLKPRELREKIVRQFSVHAQSGFTVNVMSFGFKYGIPIDADLVFDVRFLPNPYYIEHMRPKTGLDDEVSSYVLKWGETQKFLEKLLDLLAFMLPYYQREGKSQLVIAIGCTGGQHRSVALAEYIARHFSADYKTVVSHRDMERRKEAHR</sequence>
<gene>
    <name type="ordered locus">GTNG_3015</name>
</gene>
<dbReference type="EMBL" id="CP000557">
    <property type="protein sequence ID" value="ABO68360.1"/>
    <property type="molecule type" value="Genomic_DNA"/>
</dbReference>
<dbReference type="RefSeq" id="WP_011888173.1">
    <property type="nucleotide sequence ID" value="NC_009328.1"/>
</dbReference>
<dbReference type="SMR" id="A4ISQ6"/>
<dbReference type="KEGG" id="gtn:GTNG_3015"/>
<dbReference type="eggNOG" id="COG1660">
    <property type="taxonomic scope" value="Bacteria"/>
</dbReference>
<dbReference type="HOGENOM" id="CLU_059558_0_0_9"/>
<dbReference type="Proteomes" id="UP000001578">
    <property type="component" value="Chromosome"/>
</dbReference>
<dbReference type="GO" id="GO:0005524">
    <property type="term" value="F:ATP binding"/>
    <property type="evidence" value="ECO:0007669"/>
    <property type="project" value="UniProtKB-UniRule"/>
</dbReference>
<dbReference type="GO" id="GO:0005525">
    <property type="term" value="F:GTP binding"/>
    <property type="evidence" value="ECO:0007669"/>
    <property type="project" value="UniProtKB-UniRule"/>
</dbReference>
<dbReference type="Gene3D" id="3.40.50.300">
    <property type="entry name" value="P-loop containing nucleotide triphosphate hydrolases"/>
    <property type="match status" value="1"/>
</dbReference>
<dbReference type="HAMAP" id="MF_00636">
    <property type="entry name" value="RapZ_like"/>
    <property type="match status" value="1"/>
</dbReference>
<dbReference type="InterPro" id="IPR027417">
    <property type="entry name" value="P-loop_NTPase"/>
</dbReference>
<dbReference type="InterPro" id="IPR005337">
    <property type="entry name" value="RapZ-like"/>
</dbReference>
<dbReference type="InterPro" id="IPR053930">
    <property type="entry name" value="RapZ-like_N"/>
</dbReference>
<dbReference type="InterPro" id="IPR053931">
    <property type="entry name" value="RapZ_C"/>
</dbReference>
<dbReference type="NCBIfam" id="NF003828">
    <property type="entry name" value="PRK05416.1"/>
    <property type="match status" value="1"/>
</dbReference>
<dbReference type="PANTHER" id="PTHR30448">
    <property type="entry name" value="RNASE ADAPTER PROTEIN RAPZ"/>
    <property type="match status" value="1"/>
</dbReference>
<dbReference type="PANTHER" id="PTHR30448:SF0">
    <property type="entry name" value="RNASE ADAPTER PROTEIN RAPZ"/>
    <property type="match status" value="1"/>
</dbReference>
<dbReference type="Pfam" id="PF22740">
    <property type="entry name" value="PapZ_C"/>
    <property type="match status" value="1"/>
</dbReference>
<dbReference type="Pfam" id="PF03668">
    <property type="entry name" value="RapZ-like_N"/>
    <property type="match status" value="1"/>
</dbReference>
<dbReference type="PIRSF" id="PIRSF005052">
    <property type="entry name" value="P-loopkin"/>
    <property type="match status" value="1"/>
</dbReference>
<dbReference type="SUPFAM" id="SSF52540">
    <property type="entry name" value="P-loop containing nucleoside triphosphate hydrolases"/>
    <property type="match status" value="1"/>
</dbReference>